<evidence type="ECO:0000255" key="1">
    <source>
        <dbReference type="HAMAP-Rule" id="MF_03001"/>
    </source>
</evidence>
<reference key="1">
    <citation type="journal article" date="2002" name="Eukaryot. Cell">
        <title>Mating-type locus of Cryptococcus neoformans: a step in the evolution of sex chromosomes.</title>
        <authorList>
            <person name="Lengeler K.B."/>
            <person name="Fox D.S."/>
            <person name="Fraser J.A."/>
            <person name="Allen A."/>
            <person name="Forrester K."/>
            <person name="Dietrich F.S."/>
            <person name="Heitman J."/>
        </authorList>
    </citation>
    <scope>NUCLEOTIDE SEQUENCE [GENOMIC DNA]</scope>
    <source>
        <strain>JEC21 / ATCC MYA-565</strain>
    </source>
</reference>
<reference key="2">
    <citation type="journal article" date="2005" name="Science">
        <title>The genome of the basidiomycetous yeast and human pathogen Cryptococcus neoformans.</title>
        <authorList>
            <person name="Loftus B.J."/>
            <person name="Fung E."/>
            <person name="Roncaglia P."/>
            <person name="Rowley D."/>
            <person name="Amedeo P."/>
            <person name="Bruno D."/>
            <person name="Vamathevan J."/>
            <person name="Miranda M."/>
            <person name="Anderson I.J."/>
            <person name="Fraser J.A."/>
            <person name="Allen J.E."/>
            <person name="Bosdet I.E."/>
            <person name="Brent M.R."/>
            <person name="Chiu R."/>
            <person name="Doering T.L."/>
            <person name="Donlin M.J."/>
            <person name="D'Souza C.A."/>
            <person name="Fox D.S."/>
            <person name="Grinberg V."/>
            <person name="Fu J."/>
            <person name="Fukushima M."/>
            <person name="Haas B.J."/>
            <person name="Huang J.C."/>
            <person name="Janbon G."/>
            <person name="Jones S.J.M."/>
            <person name="Koo H.L."/>
            <person name="Krzywinski M.I."/>
            <person name="Kwon-Chung K.J."/>
            <person name="Lengeler K.B."/>
            <person name="Maiti R."/>
            <person name="Marra M.A."/>
            <person name="Marra R.E."/>
            <person name="Mathewson C.A."/>
            <person name="Mitchell T.G."/>
            <person name="Pertea M."/>
            <person name="Riggs F.R."/>
            <person name="Salzberg S.L."/>
            <person name="Schein J.E."/>
            <person name="Shvartsbeyn A."/>
            <person name="Shin H."/>
            <person name="Shumway M."/>
            <person name="Specht C.A."/>
            <person name="Suh B.B."/>
            <person name="Tenney A."/>
            <person name="Utterback T.R."/>
            <person name="Wickes B.L."/>
            <person name="Wortman J.R."/>
            <person name="Wye N.H."/>
            <person name="Kronstad J.W."/>
            <person name="Lodge J.K."/>
            <person name="Heitman J."/>
            <person name="Davis R.W."/>
            <person name="Fraser C.M."/>
            <person name="Hyman R.W."/>
        </authorList>
    </citation>
    <scope>NUCLEOTIDE SEQUENCE [LARGE SCALE GENOMIC DNA]</scope>
    <source>
        <strain>JEC21 / ATCC MYA-565</strain>
    </source>
</reference>
<protein>
    <recommendedName>
        <fullName evidence="1">Eukaryotic translation initiation factor 3 subunit B</fullName>
        <shortName evidence="1">eIF3b</shortName>
    </recommendedName>
    <alternativeName>
        <fullName evidence="1">Eukaryotic translation initiation factor 3 90 kDa subunit homolog</fullName>
        <shortName evidence="1">eIF3 p90</shortName>
    </alternativeName>
    <alternativeName>
        <fullName>Translation initiation factor eIF3 p90 subunit homolog</fullName>
    </alternativeName>
</protein>
<sequence length="753" mass="86204">MSAADLDYFSEDEQREIEAELDTGFKDIEEKYAVTAQKGFETMLVVDNIPIVDGSKKQRLLERLRQTFAKVGAPIEEESIDMPWNAAAGTNKGFVFLTYPDVKEAENAVHTLDGVSFGKNVLHVNRFGDIQRFASMPVGEGDLPSGWKEKEYIEKDYLRNWLGDIAGRDQYVTFWETEVTVWWNGRNGTAEALKGPDGKPVKNSKWGELYLQWSTMGTYLASLHRVGVALWSGPKLDGPIGVNVLRFTHPNVRLIQFSPCENYLVTWSEDPLPNYENHPNAALRDTFGPEDEGNQYVIWDIKTTRVLRTFPGDKSAIGVDDTQSRMSWPTFKWSADDSYIAKCNVGAGISVYELPTMGLLDRKSIKIEGVQDFEWCPMSQKDLIARQEGKGKECVLAFWTPEAQNQPARVNIMAVPSRTILRSKNLFNVSECKFYWQSQGDFLCVKVDRHARKAKSKKATSCNLEIFRMREKDYPVEVLEFKDYVPQFAWEPSGTRFAIVLQAETNLPSVSGASTKYSIDFYQLDSKKGDFIAIKHLDSKMANTLVWSPKGRHIALATIGSSSKYDIEFWDLDFTIDERREAAELGANVTMLGTGEHYGITEIAWDPSGRYIATSASTWRQSPEPGFSIWDFKGQQLLHESRDRFKQFLWRPRPPTLLSKDQIKKVRKELREYSRQFDEEDAAEENRGSAEKLAQRRREIGEWNAWRTRNNDRLAFERENRGKSKAKIDVKGQEARVEEWVEELIDETEELSM</sequence>
<organism>
    <name type="scientific">Cryptococcus neoformans var. neoformans serotype D (strain JEC21 / ATCC MYA-565)</name>
    <name type="common">Filobasidiella neoformans</name>
    <dbReference type="NCBI Taxonomy" id="214684"/>
    <lineage>
        <taxon>Eukaryota</taxon>
        <taxon>Fungi</taxon>
        <taxon>Dikarya</taxon>
        <taxon>Basidiomycota</taxon>
        <taxon>Agaricomycotina</taxon>
        <taxon>Tremellomycetes</taxon>
        <taxon>Tremellales</taxon>
        <taxon>Cryptococcaceae</taxon>
        <taxon>Cryptococcus</taxon>
        <taxon>Cryptococcus neoformans species complex</taxon>
    </lineage>
</organism>
<proteinExistence type="inferred from homology"/>
<gene>
    <name evidence="1" type="primary">PRT1</name>
    <name type="ordered locus">CND05740</name>
</gene>
<accession>P0CN44</accession>
<accession>Q55UP4</accession>
<accession>Q5KHP8</accession>
<accession>Q8J0V9</accession>
<feature type="chain" id="PRO_0000363817" description="Eukaryotic translation initiation factor 3 subunit B">
    <location>
        <begin position="1"/>
        <end position="753"/>
    </location>
</feature>
<feature type="domain" description="RRM" evidence="1">
    <location>
        <begin position="42"/>
        <end position="129"/>
    </location>
</feature>
<feature type="repeat" description="WD 1">
    <location>
        <begin position="142"/>
        <end position="185"/>
    </location>
</feature>
<feature type="repeat" description="WD 2">
    <location>
        <begin position="203"/>
        <end position="241"/>
    </location>
</feature>
<feature type="repeat" description="WD 3">
    <location>
        <begin position="321"/>
        <end position="362"/>
    </location>
</feature>
<feature type="repeat" description="WD 4">
    <location>
        <begin position="537"/>
        <end position="580"/>
    </location>
</feature>
<feature type="repeat" description="WD 5">
    <location>
        <begin position="595"/>
        <end position="640"/>
    </location>
</feature>
<feature type="coiled-coil region" evidence="1">
    <location>
        <begin position="723"/>
        <end position="753"/>
    </location>
</feature>
<dbReference type="EMBL" id="AF542531">
    <property type="protein sequence ID" value="AAN75717.2"/>
    <property type="molecule type" value="Genomic_DNA"/>
</dbReference>
<dbReference type="EMBL" id="AE017344">
    <property type="protein sequence ID" value="AAW43191.1"/>
    <property type="molecule type" value="Genomic_DNA"/>
</dbReference>
<dbReference type="RefSeq" id="XP_570498.1">
    <property type="nucleotide sequence ID" value="XM_570498.1"/>
</dbReference>
<dbReference type="SMR" id="P0CN44"/>
<dbReference type="FunCoup" id="P0CN44">
    <property type="interactions" value="886"/>
</dbReference>
<dbReference type="STRING" id="214684.P0CN44"/>
<dbReference type="PaxDb" id="214684-P0CN44"/>
<dbReference type="EnsemblFungi" id="AAW43191">
    <property type="protein sequence ID" value="AAW43191"/>
    <property type="gene ID" value="CND05740"/>
</dbReference>
<dbReference type="VEuPathDB" id="FungiDB:CND05740"/>
<dbReference type="eggNOG" id="KOG2314">
    <property type="taxonomic scope" value="Eukaryota"/>
</dbReference>
<dbReference type="HOGENOM" id="CLU_011152_4_0_1"/>
<dbReference type="InParanoid" id="P0CN44"/>
<dbReference type="OMA" id="LWGGPQF"/>
<dbReference type="OrthoDB" id="10250414at2759"/>
<dbReference type="Proteomes" id="UP000002149">
    <property type="component" value="Chromosome 4"/>
</dbReference>
<dbReference type="GO" id="GO:0010494">
    <property type="term" value="C:cytoplasmic stress granule"/>
    <property type="evidence" value="ECO:0007669"/>
    <property type="project" value="EnsemblFungi"/>
</dbReference>
<dbReference type="GO" id="GO:0016282">
    <property type="term" value="C:eukaryotic 43S preinitiation complex"/>
    <property type="evidence" value="ECO:0007669"/>
    <property type="project" value="UniProtKB-UniRule"/>
</dbReference>
<dbReference type="GO" id="GO:0033290">
    <property type="term" value="C:eukaryotic 48S preinitiation complex"/>
    <property type="evidence" value="ECO:0007669"/>
    <property type="project" value="UniProtKB-UniRule"/>
</dbReference>
<dbReference type="GO" id="GO:0005852">
    <property type="term" value="C:eukaryotic translation initiation factor 3 complex"/>
    <property type="evidence" value="ECO:0000318"/>
    <property type="project" value="GO_Central"/>
</dbReference>
<dbReference type="GO" id="GO:0071540">
    <property type="term" value="C:eukaryotic translation initiation factor 3 complex, eIF3e"/>
    <property type="evidence" value="ECO:0007669"/>
    <property type="project" value="EnsemblFungi"/>
</dbReference>
<dbReference type="GO" id="GO:0071541">
    <property type="term" value="C:eukaryotic translation initiation factor 3 complex, eIF3m"/>
    <property type="evidence" value="ECO:0007669"/>
    <property type="project" value="EnsemblFungi"/>
</dbReference>
<dbReference type="GO" id="GO:0003723">
    <property type="term" value="F:RNA binding"/>
    <property type="evidence" value="ECO:0007669"/>
    <property type="project" value="UniProtKB-UniRule"/>
</dbReference>
<dbReference type="GO" id="GO:0003743">
    <property type="term" value="F:translation initiation factor activity"/>
    <property type="evidence" value="ECO:0007669"/>
    <property type="project" value="UniProtKB-UniRule"/>
</dbReference>
<dbReference type="GO" id="GO:0031369">
    <property type="term" value="F:translation initiation factor binding"/>
    <property type="evidence" value="ECO:0007669"/>
    <property type="project" value="InterPro"/>
</dbReference>
<dbReference type="GO" id="GO:0001732">
    <property type="term" value="P:formation of cytoplasmic translation initiation complex"/>
    <property type="evidence" value="ECO:0007669"/>
    <property type="project" value="UniProtKB-UniRule"/>
</dbReference>
<dbReference type="GO" id="GO:0006413">
    <property type="term" value="P:translational initiation"/>
    <property type="evidence" value="ECO:0000318"/>
    <property type="project" value="GO_Central"/>
</dbReference>
<dbReference type="FunFam" id="2.130.10.10:FF:000764">
    <property type="entry name" value="Eukaryotic translation initiation factor 3 subunit B"/>
    <property type="match status" value="1"/>
</dbReference>
<dbReference type="FunFam" id="2.130.10.10:FF:001138">
    <property type="entry name" value="Eukaryotic translation initiation factor 3 subunit B"/>
    <property type="match status" value="1"/>
</dbReference>
<dbReference type="Gene3D" id="3.30.70.330">
    <property type="match status" value="1"/>
</dbReference>
<dbReference type="Gene3D" id="2.130.10.10">
    <property type="entry name" value="YVTN repeat-like/Quinoprotein amine dehydrogenase"/>
    <property type="match status" value="2"/>
</dbReference>
<dbReference type="HAMAP" id="MF_03001">
    <property type="entry name" value="eIF3b"/>
    <property type="match status" value="1"/>
</dbReference>
<dbReference type="InterPro" id="IPR011400">
    <property type="entry name" value="EIF3B"/>
</dbReference>
<dbReference type="InterPro" id="IPR012677">
    <property type="entry name" value="Nucleotide-bd_a/b_plait_sf"/>
</dbReference>
<dbReference type="InterPro" id="IPR035979">
    <property type="entry name" value="RBD_domain_sf"/>
</dbReference>
<dbReference type="InterPro" id="IPR000504">
    <property type="entry name" value="RRM_dom"/>
</dbReference>
<dbReference type="InterPro" id="IPR013979">
    <property type="entry name" value="TIF_beta_prop-like"/>
</dbReference>
<dbReference type="InterPro" id="IPR015943">
    <property type="entry name" value="WD40/YVTN_repeat-like_dom_sf"/>
</dbReference>
<dbReference type="PANTHER" id="PTHR14068">
    <property type="entry name" value="EUKARYOTIC TRANSLATION INITIATION FACTOR 3 EIF3 -RELATED"/>
    <property type="match status" value="1"/>
</dbReference>
<dbReference type="PANTHER" id="PTHR14068:SF0">
    <property type="entry name" value="EUKARYOTIC TRANSLATION INITIATION FACTOR 3 SUBUNIT B"/>
    <property type="match status" value="1"/>
</dbReference>
<dbReference type="Pfam" id="PF08662">
    <property type="entry name" value="eIF2A"/>
    <property type="match status" value="1"/>
</dbReference>
<dbReference type="Pfam" id="PF00076">
    <property type="entry name" value="RRM_1"/>
    <property type="match status" value="1"/>
</dbReference>
<dbReference type="PIRSF" id="PIRSF036424">
    <property type="entry name" value="eIF3b"/>
    <property type="match status" value="1"/>
</dbReference>
<dbReference type="SUPFAM" id="SSF82171">
    <property type="entry name" value="DPP6 N-terminal domain-like"/>
    <property type="match status" value="1"/>
</dbReference>
<dbReference type="SUPFAM" id="SSF54928">
    <property type="entry name" value="RNA-binding domain, RBD"/>
    <property type="match status" value="1"/>
</dbReference>
<dbReference type="PROSITE" id="PS50102">
    <property type="entry name" value="RRM"/>
    <property type="match status" value="1"/>
</dbReference>
<name>EIF3B_CRYNJ</name>
<keyword id="KW-0175">Coiled coil</keyword>
<keyword id="KW-0963">Cytoplasm</keyword>
<keyword id="KW-0396">Initiation factor</keyword>
<keyword id="KW-0648">Protein biosynthesis</keyword>
<keyword id="KW-1185">Reference proteome</keyword>
<keyword id="KW-0677">Repeat</keyword>
<keyword id="KW-0694">RNA-binding</keyword>
<keyword id="KW-0853">WD repeat</keyword>
<comment type="function">
    <text evidence="1">RNA-binding component of the eukaryotic translation initiation factor 3 (eIF-3) complex, which is involved in protein synthesis of a specialized repertoire of mRNAs and, together with other initiation factors, stimulates binding of mRNA and methionyl-tRNAi to the 40S ribosome. The eIF-3 complex specifically targets and initiates translation of a subset of mRNAs involved in cell proliferation.</text>
</comment>
<comment type="subunit">
    <text evidence="1">Component of the eukaryotic translation initiation factor 3 (eIF-3) complex.</text>
</comment>
<comment type="subcellular location">
    <subcellularLocation>
        <location evidence="1">Cytoplasm</location>
    </subcellularLocation>
</comment>
<comment type="similarity">
    <text evidence="1">Belongs to the eIF-3 subunit B family.</text>
</comment>